<protein>
    <recommendedName>
        <fullName>ARM REPEAT PROTEIN INTERACTING WITH ABF2</fullName>
        <shortName>ARIA</shortName>
    </recommendedName>
</protein>
<keyword id="KW-0025">Alternative splicing</keyword>
<keyword id="KW-0539">Nucleus</keyword>
<keyword id="KW-1185">Reference proteome</keyword>
<keyword id="KW-0677">Repeat</keyword>
<keyword id="KW-0833">Ubl conjugation pathway</keyword>
<organism>
    <name type="scientific">Arabidopsis thaliana</name>
    <name type="common">Mouse-ear cress</name>
    <dbReference type="NCBI Taxonomy" id="3702"/>
    <lineage>
        <taxon>Eukaryota</taxon>
        <taxon>Viridiplantae</taxon>
        <taxon>Streptophyta</taxon>
        <taxon>Embryophyta</taxon>
        <taxon>Tracheophyta</taxon>
        <taxon>Spermatophyta</taxon>
        <taxon>Magnoliopsida</taxon>
        <taxon>eudicotyledons</taxon>
        <taxon>Gunneridae</taxon>
        <taxon>Pentapetalae</taxon>
        <taxon>rosids</taxon>
        <taxon>malvids</taxon>
        <taxon>Brassicales</taxon>
        <taxon>Brassicaceae</taxon>
        <taxon>Camelineae</taxon>
        <taxon>Arabidopsis</taxon>
    </lineage>
</organism>
<gene>
    <name type="primary">ARIA</name>
    <name type="ordered locus">At5g19330</name>
    <name type="ORF">F7K24.80</name>
</gene>
<dbReference type="EMBL" id="AF296837">
    <property type="status" value="NOT_ANNOTATED_CDS"/>
    <property type="molecule type" value="Genomic_DNA"/>
</dbReference>
<dbReference type="EMBL" id="CP002688">
    <property type="protein sequence ID" value="AED92686.1"/>
    <property type="molecule type" value="Genomic_DNA"/>
</dbReference>
<dbReference type="EMBL" id="AY058878">
    <property type="status" value="NOT_ANNOTATED_CDS"/>
    <property type="molecule type" value="mRNA"/>
</dbReference>
<dbReference type="EMBL" id="AK317640">
    <property type="protein sequence ID" value="BAH20301.1"/>
    <property type="molecule type" value="mRNA"/>
</dbReference>
<dbReference type="EMBL" id="AK220904">
    <property type="protein sequence ID" value="BAD94337.1"/>
    <property type="molecule type" value="mRNA"/>
</dbReference>
<dbReference type="RefSeq" id="NP_850852.1">
    <molecule id="B9DHT4-1"/>
    <property type="nucleotide sequence ID" value="NM_180521.3"/>
</dbReference>
<dbReference type="SMR" id="B9DHT4"/>
<dbReference type="BioGRID" id="17329">
    <property type="interactions" value="23"/>
</dbReference>
<dbReference type="FunCoup" id="B9DHT4">
    <property type="interactions" value="2332"/>
</dbReference>
<dbReference type="IntAct" id="B9DHT4">
    <property type="interactions" value="22"/>
</dbReference>
<dbReference type="STRING" id="3702.B9DHT4"/>
<dbReference type="TCDB" id="8.A.160.1.3">
    <property type="family name" value="the catenin (catenin) family"/>
</dbReference>
<dbReference type="iPTMnet" id="B9DHT4"/>
<dbReference type="PaxDb" id="3702-AT5G19330.1"/>
<dbReference type="ProteomicsDB" id="240972">
    <molecule id="B9DHT4-1"/>
</dbReference>
<dbReference type="EnsemblPlants" id="AT5G19330.1">
    <molecule id="B9DHT4-1"/>
    <property type="protein sequence ID" value="AT5G19330.1"/>
    <property type="gene ID" value="AT5G19330"/>
</dbReference>
<dbReference type="GeneID" id="832053"/>
<dbReference type="Gramene" id="AT5G19330.1">
    <molecule id="B9DHT4-1"/>
    <property type="protein sequence ID" value="AT5G19330.1"/>
    <property type="gene ID" value="AT5G19330"/>
</dbReference>
<dbReference type="KEGG" id="ath:AT5G19330"/>
<dbReference type="Araport" id="AT5G19330"/>
<dbReference type="TAIR" id="AT5G19330">
    <property type="gene designation" value="ARIA"/>
</dbReference>
<dbReference type="eggNOG" id="KOG0167">
    <property type="taxonomic scope" value="Eukaryota"/>
</dbReference>
<dbReference type="HOGENOM" id="CLU_392026_0_0_1"/>
<dbReference type="InParanoid" id="B9DHT4"/>
<dbReference type="OMA" id="VCHLKEP"/>
<dbReference type="OrthoDB" id="29145at2759"/>
<dbReference type="PhylomeDB" id="B9DHT4"/>
<dbReference type="UniPathway" id="UPA00143"/>
<dbReference type="PRO" id="PR:B9DHT4"/>
<dbReference type="Proteomes" id="UP000006548">
    <property type="component" value="Chromosome 5"/>
</dbReference>
<dbReference type="ExpressionAtlas" id="B9DHT4">
    <property type="expression patterns" value="baseline and differential"/>
</dbReference>
<dbReference type="GO" id="GO:0005634">
    <property type="term" value="C:nucleus"/>
    <property type="evidence" value="ECO:0000314"/>
    <property type="project" value="TAIR"/>
</dbReference>
<dbReference type="GO" id="GO:0005886">
    <property type="term" value="C:plasma membrane"/>
    <property type="evidence" value="ECO:0000314"/>
    <property type="project" value="TAIR"/>
</dbReference>
<dbReference type="GO" id="GO:0010187">
    <property type="term" value="P:negative regulation of seed germination"/>
    <property type="evidence" value="ECO:0000315"/>
    <property type="project" value="TAIR"/>
</dbReference>
<dbReference type="GO" id="GO:0016567">
    <property type="term" value="P:protein ubiquitination"/>
    <property type="evidence" value="ECO:0007669"/>
    <property type="project" value="UniProtKB-UniPathway"/>
</dbReference>
<dbReference type="GO" id="GO:0009737">
    <property type="term" value="P:response to abscisic acid"/>
    <property type="evidence" value="ECO:0000315"/>
    <property type="project" value="TAIR"/>
</dbReference>
<dbReference type="GO" id="GO:0009651">
    <property type="term" value="P:response to salt stress"/>
    <property type="evidence" value="ECO:0000270"/>
    <property type="project" value="TAIR"/>
</dbReference>
<dbReference type="CDD" id="cd18504">
    <property type="entry name" value="BACK_ARIA_like"/>
    <property type="match status" value="1"/>
</dbReference>
<dbReference type="CDD" id="cd18352">
    <property type="entry name" value="BTB_POZ_ARIA_plant"/>
    <property type="match status" value="1"/>
</dbReference>
<dbReference type="FunFam" id="1.25.10.10:FF:000970">
    <property type="entry name" value="ARM REPEAT PROTEIN INTERACTING WITH ABF2"/>
    <property type="match status" value="1"/>
</dbReference>
<dbReference type="FunFam" id="3.30.710.10:FF:000178">
    <property type="entry name" value="Armadillo/beta-catenin repeat family protein"/>
    <property type="match status" value="1"/>
</dbReference>
<dbReference type="Gene3D" id="1.25.10.10">
    <property type="entry name" value="Leucine-rich Repeat Variant"/>
    <property type="match status" value="2"/>
</dbReference>
<dbReference type="Gene3D" id="3.30.710.10">
    <property type="entry name" value="Potassium Channel Kv1.1, Chain A"/>
    <property type="match status" value="1"/>
</dbReference>
<dbReference type="InterPro" id="IPR044282">
    <property type="entry name" value="ABAP1/ARIA"/>
</dbReference>
<dbReference type="InterPro" id="IPR011989">
    <property type="entry name" value="ARM-like"/>
</dbReference>
<dbReference type="InterPro" id="IPR016024">
    <property type="entry name" value="ARM-type_fold"/>
</dbReference>
<dbReference type="InterPro" id="IPR000225">
    <property type="entry name" value="Armadillo"/>
</dbReference>
<dbReference type="InterPro" id="IPR000210">
    <property type="entry name" value="BTB/POZ_dom"/>
</dbReference>
<dbReference type="InterPro" id="IPR011333">
    <property type="entry name" value="SKP1/BTB/POZ_sf"/>
</dbReference>
<dbReference type="PANTHER" id="PTHR46710">
    <property type="entry name" value="ARM REPEAT PROTEIN INTERACTING WITH ABF2"/>
    <property type="match status" value="1"/>
</dbReference>
<dbReference type="PANTHER" id="PTHR46710:SF1">
    <property type="entry name" value="ARM REPEAT PROTEIN INTERACTING WITH ABF2"/>
    <property type="match status" value="1"/>
</dbReference>
<dbReference type="Pfam" id="PF00514">
    <property type="entry name" value="Arm"/>
    <property type="match status" value="3"/>
</dbReference>
<dbReference type="Pfam" id="PF00651">
    <property type="entry name" value="BTB"/>
    <property type="match status" value="1"/>
</dbReference>
<dbReference type="SMART" id="SM00185">
    <property type="entry name" value="ARM"/>
    <property type="match status" value="9"/>
</dbReference>
<dbReference type="SMART" id="SM00225">
    <property type="entry name" value="BTB"/>
    <property type="match status" value="1"/>
</dbReference>
<dbReference type="SUPFAM" id="SSF48371">
    <property type="entry name" value="ARM repeat"/>
    <property type="match status" value="2"/>
</dbReference>
<dbReference type="SUPFAM" id="SSF54695">
    <property type="entry name" value="POZ domain"/>
    <property type="match status" value="1"/>
</dbReference>
<dbReference type="PROSITE" id="PS50176">
    <property type="entry name" value="ARM_REPEAT"/>
    <property type="match status" value="5"/>
</dbReference>
<dbReference type="PROSITE" id="PS50097">
    <property type="entry name" value="BTB"/>
    <property type="match status" value="1"/>
</dbReference>
<sequence length="710" mass="78186">MDQQPERREGRSFPERKGQKRKLEEGAAAVEDREISAVSTDGGQALLSEVAAQVSVLNSAFSWQESDRAAAKRATQVLAELAKNEDLVNVIVDGGAVPALMTHLQAPPYNDGDLAEKPYEHEVEKGSAFALGLLAIKPEYQKLIVDKGALPHLVNLLKRNKDGSSSRAVNSVIRRAADAITNLAHENSSIKTRVRVEGGIPPLVELLEFSDSKVQRAAAGALRTLAFKNDDNKNQIVECNALPTLILMLGSEDAAIHYEAVGVIGNLVHSSPHIKKEVLTAGALQPVIGLLSSCCPESQREAALLLGQFASTDSDCKVHIVQRGAVRPLIEMLQSPDVQLKEMSAFALGRLAQDAHNQAGIAHSGGLGPLLKLLDSRNGSLQHNAAFALYGLADNEDNVSDFIRVGGIQKLQDGEFIVQATKDCVSKTLKRLEEKIHGRVLRHLLYLMRISEKSIQRRVALALAHLCSPEDQRTIFIDDNGLELLLGLLGSLNTKQQLDGAAALYKLANKSMALSPVDAAPPSPTQRVYLGEQYVNNATLSDVTFLVEGRTFYAHRICLLASSDAFRAMFDGGYREKDARDIEIPNIKWEVFELMMRFIYTGSVDITNEISKDLLRAADQYLLEGLKRLCEYTIAQDITLESIGDMYELSEAFHAMSLRQACIMFILEHFDKLSSMPWQNELVQRTIPEIREYFCRALTKSTTNLQSLRL</sequence>
<evidence type="ECO:0000250" key="1"/>
<evidence type="ECO:0000255" key="2">
    <source>
        <dbReference type="PROSITE-ProRule" id="PRU00037"/>
    </source>
</evidence>
<evidence type="ECO:0000256" key="3">
    <source>
        <dbReference type="SAM" id="MobiDB-lite"/>
    </source>
</evidence>
<evidence type="ECO:0000269" key="4">
    <source>
    </source>
</evidence>
<evidence type="ECO:0000269" key="5">
    <source>
    </source>
</evidence>
<evidence type="ECO:0000269" key="6">
    <source>
    </source>
</evidence>
<evidence type="ECO:0000305" key="7"/>
<comment type="function">
    <text evidence="1 4">May act as a substrate-specific adapter of an E3 ubiquitin-protein ligase complex (CUL3-RBX1-BTB) which mediates the ubiquitination and subsequent proteasomal degradation of target proteins (By similarity). Acts as a positive regulator of ABA response via the modulation of the transcriptional activity of ABF2, a transcription factor which controls ABA-dependent gene expression via the G-box-type ABA-responsive elements. Negative regulator of seed germination and young seedling growth.</text>
</comment>
<comment type="pathway">
    <text>Protein modification; protein ubiquitination.</text>
</comment>
<comment type="subunit">
    <text evidence="4 6">Interacts with ABF2 (PubMed:15516505). Interacts with DUF7/AIP1 (PubMed:26538092).</text>
</comment>
<comment type="interaction">
    <interactant intactId="EBI-15192195">
        <id>B9DHT4</id>
    </interactant>
    <interactant intactId="EBI-3946783">
        <id>Q9C5W9</id>
        <label>ARF18</label>
    </interactant>
    <organismsDiffer>false</organismsDiffer>
    <experiments>3</experiments>
</comment>
<comment type="interaction">
    <interactant intactId="EBI-15192195">
        <id>B9DHT4</id>
    </interactant>
    <interactant intactId="EBI-15198265">
        <id>F4IEB6</id>
        <label>At1g32700</label>
    </interactant>
    <organismsDiffer>false</organismsDiffer>
    <experiments>3</experiments>
</comment>
<comment type="interaction">
    <interactant intactId="EBI-15192195">
        <id>B9DHT4</id>
    </interactant>
    <interactant intactId="EBI-15192193">
        <id>C0SV91</id>
        <label>At2g46670</label>
    </interactant>
    <organismsDiffer>false</organismsDiffer>
    <experiments>3</experiments>
</comment>
<comment type="interaction">
    <interactant intactId="EBI-15192195">
        <id>B9DHT4</id>
    </interactant>
    <interactant intactId="EBI-632200">
        <id>Q38826</id>
        <label>IAA8</label>
    </interactant>
    <organismsDiffer>false</organismsDiffer>
    <experiments>3</experiments>
</comment>
<comment type="interaction">
    <interactant intactId="EBI-15192195">
        <id>B9DHT4</id>
    </interactant>
    <interactant intactId="EBI-15192881">
        <id>F4IPE3</id>
        <label>SGR5</label>
    </interactant>
    <organismsDiffer>false</organismsDiffer>
    <experiments>3</experiments>
</comment>
<comment type="subcellular location">
    <subcellularLocation>
        <location evidence="4">Nucleus</location>
    </subcellularLocation>
</comment>
<comment type="alternative products">
    <event type="alternative splicing"/>
    <isoform>
        <id>B9DHT4-1</id>
        <name>1</name>
        <sequence type="displayed"/>
    </isoform>
    <text>A number of isoforms are produced. According to EST sequences.</text>
</comment>
<comment type="tissue specificity">
    <text evidence="4">Detected in embryos and most of the vegetative and reproductive organs.</text>
</comment>
<comment type="induction">
    <text evidence="4">Up-regulated by abscisic acid (ABA) and high salt.</text>
</comment>
<comment type="domain">
    <text evidence="5">The BTB/POZ domain mediates the interaction with some component of ubiquitin ligase complexes.</text>
</comment>
<comment type="disruption phenotype">
    <text evidence="4">Abscisic acid (ABA) and glucose insensitivities. More efficient germination and postgermination growth.</text>
</comment>
<comment type="sequence caution" evidence="7">
    <conflict type="frameshift">
        <sequence resource="EMBL" id="AY058878"/>
    </conflict>
</comment>
<reference key="1">
    <citation type="journal article" date="2000" name="Nature">
        <title>Sequence and analysis of chromosome 5 of the plant Arabidopsis thaliana.</title>
        <authorList>
            <person name="Tabata S."/>
            <person name="Kaneko T."/>
            <person name="Nakamura Y."/>
            <person name="Kotani H."/>
            <person name="Kato T."/>
            <person name="Asamizu E."/>
            <person name="Miyajima N."/>
            <person name="Sasamoto S."/>
            <person name="Kimura T."/>
            <person name="Hosouchi T."/>
            <person name="Kawashima K."/>
            <person name="Kohara M."/>
            <person name="Matsumoto M."/>
            <person name="Matsuno A."/>
            <person name="Muraki A."/>
            <person name="Nakayama S."/>
            <person name="Nakazaki N."/>
            <person name="Naruo K."/>
            <person name="Okumura S."/>
            <person name="Shinpo S."/>
            <person name="Takeuchi C."/>
            <person name="Wada T."/>
            <person name="Watanabe A."/>
            <person name="Yamada M."/>
            <person name="Yasuda M."/>
            <person name="Sato S."/>
            <person name="de la Bastide M."/>
            <person name="Huang E."/>
            <person name="Spiegel L."/>
            <person name="Gnoj L."/>
            <person name="O'Shaughnessy A."/>
            <person name="Preston R."/>
            <person name="Habermann K."/>
            <person name="Murray J."/>
            <person name="Johnson D."/>
            <person name="Rohlfing T."/>
            <person name="Nelson J."/>
            <person name="Stoneking T."/>
            <person name="Pepin K."/>
            <person name="Spieth J."/>
            <person name="Sekhon M."/>
            <person name="Armstrong J."/>
            <person name="Becker M."/>
            <person name="Belter E."/>
            <person name="Cordum H."/>
            <person name="Cordes M."/>
            <person name="Courtney L."/>
            <person name="Courtney W."/>
            <person name="Dante M."/>
            <person name="Du H."/>
            <person name="Edwards J."/>
            <person name="Fryman J."/>
            <person name="Haakensen B."/>
            <person name="Lamar E."/>
            <person name="Latreille P."/>
            <person name="Leonard S."/>
            <person name="Meyer R."/>
            <person name="Mulvaney E."/>
            <person name="Ozersky P."/>
            <person name="Riley A."/>
            <person name="Strowmatt C."/>
            <person name="Wagner-McPherson C."/>
            <person name="Wollam A."/>
            <person name="Yoakum M."/>
            <person name="Bell M."/>
            <person name="Dedhia N."/>
            <person name="Parnell L."/>
            <person name="Shah R."/>
            <person name="Rodriguez M."/>
            <person name="Hoon See L."/>
            <person name="Vil D."/>
            <person name="Baker J."/>
            <person name="Kirchoff K."/>
            <person name="Toth K."/>
            <person name="King L."/>
            <person name="Bahret A."/>
            <person name="Miller B."/>
            <person name="Marra M.A."/>
            <person name="Martienssen R."/>
            <person name="McCombie W.R."/>
            <person name="Wilson R.K."/>
            <person name="Murphy G."/>
            <person name="Bancroft I."/>
            <person name="Volckaert G."/>
            <person name="Wambutt R."/>
            <person name="Duesterhoeft A."/>
            <person name="Stiekema W."/>
            <person name="Pohl T."/>
            <person name="Entian K.-D."/>
            <person name="Terryn N."/>
            <person name="Hartley N."/>
            <person name="Bent E."/>
            <person name="Johnson S."/>
            <person name="Langham S.-A."/>
            <person name="McCullagh B."/>
            <person name="Robben J."/>
            <person name="Grymonprez B."/>
            <person name="Zimmermann W."/>
            <person name="Ramsperger U."/>
            <person name="Wedler H."/>
            <person name="Balke K."/>
            <person name="Wedler E."/>
            <person name="Peters S."/>
            <person name="van Staveren M."/>
            <person name="Dirkse W."/>
            <person name="Mooijman P."/>
            <person name="Klein Lankhorst R."/>
            <person name="Weitzenegger T."/>
            <person name="Bothe G."/>
            <person name="Rose M."/>
            <person name="Hauf J."/>
            <person name="Berneiser S."/>
            <person name="Hempel S."/>
            <person name="Feldpausch M."/>
            <person name="Lamberth S."/>
            <person name="Villarroel R."/>
            <person name="Gielen J."/>
            <person name="Ardiles W."/>
            <person name="Bents O."/>
            <person name="Lemcke K."/>
            <person name="Kolesov G."/>
            <person name="Mayer K.F.X."/>
            <person name="Rudd S."/>
            <person name="Schoof H."/>
            <person name="Schueller C."/>
            <person name="Zaccaria P."/>
            <person name="Mewes H.-W."/>
            <person name="Bevan M."/>
            <person name="Fransz P.F."/>
        </authorList>
    </citation>
    <scope>NUCLEOTIDE SEQUENCE [LARGE SCALE GENOMIC DNA]</scope>
    <source>
        <strain>cv. Columbia</strain>
    </source>
</reference>
<reference key="2">
    <citation type="journal article" date="2017" name="Plant J.">
        <title>Araport11: a complete reannotation of the Arabidopsis thaliana reference genome.</title>
        <authorList>
            <person name="Cheng C.Y."/>
            <person name="Krishnakumar V."/>
            <person name="Chan A.P."/>
            <person name="Thibaud-Nissen F."/>
            <person name="Schobel S."/>
            <person name="Town C.D."/>
        </authorList>
    </citation>
    <scope>GENOME REANNOTATION</scope>
    <source>
        <strain>cv. Columbia</strain>
    </source>
</reference>
<reference key="3">
    <citation type="journal article" date="2003" name="Science">
        <title>Empirical analysis of transcriptional activity in the Arabidopsis genome.</title>
        <authorList>
            <person name="Yamada K."/>
            <person name="Lim J."/>
            <person name="Dale J.M."/>
            <person name="Chen H."/>
            <person name="Shinn P."/>
            <person name="Palm C.J."/>
            <person name="Southwick A.M."/>
            <person name="Wu H.C."/>
            <person name="Kim C.J."/>
            <person name="Nguyen M."/>
            <person name="Pham P.K."/>
            <person name="Cheuk R.F."/>
            <person name="Karlin-Newmann G."/>
            <person name="Liu S.X."/>
            <person name="Lam B."/>
            <person name="Sakano H."/>
            <person name="Wu T."/>
            <person name="Yu G."/>
            <person name="Miranda M."/>
            <person name="Quach H.L."/>
            <person name="Tripp M."/>
            <person name="Chang C.H."/>
            <person name="Lee J.M."/>
            <person name="Toriumi M.J."/>
            <person name="Chan M.M."/>
            <person name="Tang C.C."/>
            <person name="Onodera C.S."/>
            <person name="Deng J.M."/>
            <person name="Akiyama K."/>
            <person name="Ansari Y."/>
            <person name="Arakawa T."/>
            <person name="Banh J."/>
            <person name="Banno F."/>
            <person name="Bowser L."/>
            <person name="Brooks S.Y."/>
            <person name="Carninci P."/>
            <person name="Chao Q."/>
            <person name="Choy N."/>
            <person name="Enju A."/>
            <person name="Goldsmith A.D."/>
            <person name="Gurjal M."/>
            <person name="Hansen N.F."/>
            <person name="Hayashizaki Y."/>
            <person name="Johnson-Hopson C."/>
            <person name="Hsuan V.W."/>
            <person name="Iida K."/>
            <person name="Karnes M."/>
            <person name="Khan S."/>
            <person name="Koesema E."/>
            <person name="Ishida J."/>
            <person name="Jiang P.X."/>
            <person name="Jones T."/>
            <person name="Kawai J."/>
            <person name="Kamiya A."/>
            <person name="Meyers C."/>
            <person name="Nakajima M."/>
            <person name="Narusaka M."/>
            <person name="Seki M."/>
            <person name="Sakurai T."/>
            <person name="Satou M."/>
            <person name="Tamse R."/>
            <person name="Vaysberg M."/>
            <person name="Wallender E.K."/>
            <person name="Wong C."/>
            <person name="Yamamura Y."/>
            <person name="Yuan S."/>
            <person name="Shinozaki K."/>
            <person name="Davis R.W."/>
            <person name="Theologis A."/>
            <person name="Ecker J.R."/>
        </authorList>
    </citation>
    <scope>NUCLEOTIDE SEQUENCE [LARGE SCALE MRNA]</scope>
    <source>
        <strain>cv. Columbia</strain>
    </source>
</reference>
<reference key="4">
    <citation type="journal article" date="2009" name="DNA Res.">
        <title>Analysis of multiple occurrences of alternative splicing events in Arabidopsis thaliana using novel sequenced full-length cDNAs.</title>
        <authorList>
            <person name="Iida K."/>
            <person name="Fukami-Kobayashi K."/>
            <person name="Toyoda A."/>
            <person name="Sakaki Y."/>
            <person name="Kobayashi M."/>
            <person name="Seki M."/>
            <person name="Shinozaki K."/>
        </authorList>
    </citation>
    <scope>NUCLEOTIDE SEQUENCE [LARGE SCALE MRNA] OF 217-710</scope>
    <source>
        <strain>cv. Columbia</strain>
    </source>
</reference>
<reference key="5">
    <citation type="submission" date="2005-03" db="EMBL/GenBank/DDBJ databases">
        <title>Large-scale analysis of RIKEN Arabidopsis full-length (RAFL) cDNAs.</title>
        <authorList>
            <person name="Totoki Y."/>
            <person name="Seki M."/>
            <person name="Ishida J."/>
            <person name="Nakajima M."/>
            <person name="Enju A."/>
            <person name="Kamiya A."/>
            <person name="Narusaka M."/>
            <person name="Shin-i T."/>
            <person name="Nakagawa M."/>
            <person name="Sakamoto N."/>
            <person name="Oishi K."/>
            <person name="Kohara Y."/>
            <person name="Kobayashi M."/>
            <person name="Toyoda A."/>
            <person name="Sakaki Y."/>
            <person name="Sakurai T."/>
            <person name="Iida K."/>
            <person name="Akiyama K."/>
            <person name="Satou M."/>
            <person name="Toyoda T."/>
            <person name="Konagaya A."/>
            <person name="Carninci P."/>
            <person name="Kawai J."/>
            <person name="Hayashizaki Y."/>
            <person name="Shinozaki K."/>
        </authorList>
    </citation>
    <scope>NUCLEOTIDE SEQUENCE [LARGE SCALE MRNA] OF 596-710</scope>
    <source>
        <strain>cv. Columbia</strain>
    </source>
</reference>
<reference key="6">
    <citation type="journal article" date="2004" name="Plant Physiol.">
        <title>ARIA, an Arabidopsis arm repeat protein interacting with a transcriptional regulator of abscisic acid-responsive gene expression, is a novel abscisic acid signaling component.</title>
        <authorList>
            <person name="Kim S."/>
            <person name="Choi H.I."/>
            <person name="Ryu H.J."/>
            <person name="Park J.H."/>
            <person name="Kim M.D."/>
            <person name="Kim S.Y."/>
        </authorList>
    </citation>
    <scope>FUNCTION</scope>
    <scope>INTERACTION WITH ABF2</scope>
    <scope>DISRUPTION PHENOTYPE</scope>
    <scope>INDUCTION</scope>
    <scope>TISSUE SPECIFICITY</scope>
    <scope>SUBCELLULAR LOCATION</scope>
</reference>
<reference key="7">
    <citation type="journal article" date="2005" name="J. Biol. Chem.">
        <title>Cullins 3a and 3b assemble with members of the broad complex/tramtrack/bric-a-brac (BTB) protein family to form essential ubiquitin-protein ligases (E3s) in Arabidopsis.</title>
        <authorList>
            <person name="Gingerich D.J."/>
            <person name="Gagne J.M."/>
            <person name="Salter D.W."/>
            <person name="Hellmann H."/>
            <person name="Estelle M."/>
            <person name="Ma L."/>
            <person name="Vierstra R.D."/>
        </authorList>
    </citation>
    <scope>DOMAIN BTB</scope>
</reference>
<reference key="8">
    <citation type="journal article" date="2015" name="BMC Plant Biol.">
        <title>AIP1 is a novel Agenet/Tudor domain protein from Arabidopsis that interacts with regulators of DNA replication, transcription and chromatin remodeling.</title>
        <authorList>
            <person name="Brasil J.N."/>
            <person name="Cabral L.M."/>
            <person name="Eloy N.B."/>
            <person name="Primo L.M."/>
            <person name="Barroso-Neto I.L."/>
            <person name="Grangeiro L.P."/>
            <person name="Gonzalez N."/>
            <person name="Inze D."/>
            <person name="Ferreira P.C."/>
            <person name="Hemerly A.S."/>
        </authorList>
    </citation>
    <scope>INTERACTION WITH DUF7/AIP1</scope>
</reference>
<accession>B9DHT4</accession>
<accession>Q56ZQ9</accession>
<proteinExistence type="evidence at protein level"/>
<feature type="chain" id="PRO_0000405806" description="ARM REPEAT PROTEIN INTERACTING WITH ABF2">
    <location>
        <begin position="1"/>
        <end position="710"/>
    </location>
</feature>
<feature type="repeat" description="ARM 1">
    <location>
        <begin position="85"/>
        <end position="127"/>
    </location>
</feature>
<feature type="repeat" description="ARM 2">
    <location>
        <begin position="138"/>
        <end position="185"/>
    </location>
</feature>
<feature type="repeat" description="ARM 3">
    <location>
        <begin position="188"/>
        <end position="227"/>
    </location>
</feature>
<feature type="repeat" description="ARM 4">
    <location>
        <begin position="230"/>
        <end position="269"/>
    </location>
</feature>
<feature type="repeat" description="ARM 5">
    <location>
        <begin position="272"/>
        <end position="311"/>
    </location>
</feature>
<feature type="repeat" description="ARM 6">
    <location>
        <begin position="314"/>
        <end position="353"/>
    </location>
</feature>
<feature type="repeat" description="ARM 7">
    <location>
        <begin position="355"/>
        <end position="394"/>
    </location>
</feature>
<feature type="repeat" description="ARM 8">
    <location>
        <begin position="429"/>
        <end position="468"/>
    </location>
</feature>
<feature type="repeat" description="ARM 9">
    <location>
        <begin position="470"/>
        <end position="509"/>
    </location>
</feature>
<feature type="domain" description="BTB" evidence="2">
    <location>
        <begin position="541"/>
        <end position="608"/>
    </location>
</feature>
<feature type="region of interest" description="Disordered" evidence="3">
    <location>
        <begin position="1"/>
        <end position="35"/>
    </location>
</feature>
<feature type="sequence conflict" description="In Ref. 3; AY058878." evidence="7" ref="3">
    <original>G</original>
    <variation>E</variation>
    <location>
        <position position="531"/>
    </location>
</feature>
<name>ARIA_ARATH</name>